<organism>
    <name type="scientific">Burkholderia mallei (strain NCTC 10229)</name>
    <dbReference type="NCBI Taxonomy" id="412022"/>
    <lineage>
        <taxon>Bacteria</taxon>
        <taxon>Pseudomonadati</taxon>
        <taxon>Pseudomonadota</taxon>
        <taxon>Betaproteobacteria</taxon>
        <taxon>Burkholderiales</taxon>
        <taxon>Burkholderiaceae</taxon>
        <taxon>Burkholderia</taxon>
        <taxon>pseudomallei group</taxon>
    </lineage>
</organism>
<comment type="function">
    <text evidence="1">Catalyzes the conversion of dethiobiotin (DTB) to biotin by the insertion of a sulfur atom into dethiobiotin via a radical-based mechanism.</text>
</comment>
<comment type="catalytic activity">
    <reaction evidence="1">
        <text>(4R,5S)-dethiobiotin + (sulfur carrier)-SH + 2 reduced [2Fe-2S]-[ferredoxin] + 2 S-adenosyl-L-methionine = (sulfur carrier)-H + biotin + 2 5'-deoxyadenosine + 2 L-methionine + 2 oxidized [2Fe-2S]-[ferredoxin]</text>
        <dbReference type="Rhea" id="RHEA:22060"/>
        <dbReference type="Rhea" id="RHEA-COMP:10000"/>
        <dbReference type="Rhea" id="RHEA-COMP:10001"/>
        <dbReference type="Rhea" id="RHEA-COMP:14737"/>
        <dbReference type="Rhea" id="RHEA-COMP:14739"/>
        <dbReference type="ChEBI" id="CHEBI:17319"/>
        <dbReference type="ChEBI" id="CHEBI:29917"/>
        <dbReference type="ChEBI" id="CHEBI:33737"/>
        <dbReference type="ChEBI" id="CHEBI:33738"/>
        <dbReference type="ChEBI" id="CHEBI:57586"/>
        <dbReference type="ChEBI" id="CHEBI:57844"/>
        <dbReference type="ChEBI" id="CHEBI:59789"/>
        <dbReference type="ChEBI" id="CHEBI:64428"/>
        <dbReference type="ChEBI" id="CHEBI:149473"/>
        <dbReference type="EC" id="2.8.1.6"/>
    </reaction>
</comment>
<comment type="cofactor">
    <cofactor evidence="1">
        <name>[4Fe-4S] cluster</name>
        <dbReference type="ChEBI" id="CHEBI:49883"/>
    </cofactor>
    <text evidence="1">Binds 1 [4Fe-4S] cluster. The cluster is coordinated with 3 cysteines and an exchangeable S-adenosyl-L-methionine.</text>
</comment>
<comment type="cofactor">
    <cofactor evidence="1">
        <name>[2Fe-2S] cluster</name>
        <dbReference type="ChEBI" id="CHEBI:190135"/>
    </cofactor>
    <text evidence="1">Binds 1 [2Fe-2S] cluster. The cluster is coordinated with 3 cysteines and 1 arginine.</text>
</comment>
<comment type="pathway">
    <text evidence="1">Cofactor biosynthesis; biotin biosynthesis; biotin from 7,8-diaminononanoate: step 2/2.</text>
</comment>
<comment type="subunit">
    <text evidence="1">Homodimer.</text>
</comment>
<comment type="similarity">
    <text evidence="1">Belongs to the radical SAM superfamily. Biotin synthase family.</text>
</comment>
<comment type="sequence caution" evidence="3">
    <conflict type="erroneous initiation">
        <sequence resource="EMBL-CDS" id="ABN00616"/>
    </conflict>
</comment>
<feature type="chain" id="PRO_0000381266" description="Biotin synthase">
    <location>
        <begin position="1"/>
        <end position="336"/>
    </location>
</feature>
<feature type="domain" description="Radical SAM core" evidence="2">
    <location>
        <begin position="54"/>
        <end position="281"/>
    </location>
</feature>
<feature type="binding site" evidence="1">
    <location>
        <position position="69"/>
    </location>
    <ligand>
        <name>[4Fe-4S] cluster</name>
        <dbReference type="ChEBI" id="CHEBI:49883"/>
        <note>4Fe-4S-S-AdoMet</note>
    </ligand>
</feature>
<feature type="binding site" evidence="1">
    <location>
        <position position="73"/>
    </location>
    <ligand>
        <name>[4Fe-4S] cluster</name>
        <dbReference type="ChEBI" id="CHEBI:49883"/>
        <note>4Fe-4S-S-AdoMet</note>
    </ligand>
</feature>
<feature type="binding site" evidence="1">
    <location>
        <position position="76"/>
    </location>
    <ligand>
        <name>[4Fe-4S] cluster</name>
        <dbReference type="ChEBI" id="CHEBI:49883"/>
        <note>4Fe-4S-S-AdoMet</note>
    </ligand>
</feature>
<feature type="binding site" evidence="1">
    <location>
        <position position="113"/>
    </location>
    <ligand>
        <name>[2Fe-2S] cluster</name>
        <dbReference type="ChEBI" id="CHEBI:190135"/>
    </ligand>
</feature>
<feature type="binding site" evidence="1">
    <location>
        <position position="144"/>
    </location>
    <ligand>
        <name>[2Fe-2S] cluster</name>
        <dbReference type="ChEBI" id="CHEBI:190135"/>
    </ligand>
</feature>
<feature type="binding site" evidence="1">
    <location>
        <position position="204"/>
    </location>
    <ligand>
        <name>[2Fe-2S] cluster</name>
        <dbReference type="ChEBI" id="CHEBI:190135"/>
    </ligand>
</feature>
<feature type="binding site" evidence="1">
    <location>
        <position position="276"/>
    </location>
    <ligand>
        <name>[2Fe-2S] cluster</name>
        <dbReference type="ChEBI" id="CHEBI:190135"/>
    </ligand>
</feature>
<gene>
    <name evidence="1" type="primary">bioB</name>
    <name type="ordered locus">BMA10229_A2017</name>
</gene>
<accession>A2S7R3</accession>
<name>BIOB_BURM9</name>
<dbReference type="EC" id="2.8.1.6" evidence="1"/>
<dbReference type="EMBL" id="CP000546">
    <property type="protein sequence ID" value="ABN00616.1"/>
    <property type="status" value="ALT_INIT"/>
    <property type="molecule type" value="Genomic_DNA"/>
</dbReference>
<dbReference type="RefSeq" id="WP_004200336.1">
    <property type="nucleotide sequence ID" value="NC_008836.1"/>
</dbReference>
<dbReference type="SMR" id="A2S7R3"/>
<dbReference type="GeneID" id="93058882"/>
<dbReference type="KEGG" id="bml:BMA10229_A2017"/>
<dbReference type="HOGENOM" id="CLU_033172_1_2_4"/>
<dbReference type="UniPathway" id="UPA00078">
    <property type="reaction ID" value="UER00162"/>
</dbReference>
<dbReference type="Proteomes" id="UP000002283">
    <property type="component" value="Chromosome I"/>
</dbReference>
<dbReference type="GO" id="GO:0051537">
    <property type="term" value="F:2 iron, 2 sulfur cluster binding"/>
    <property type="evidence" value="ECO:0007669"/>
    <property type="project" value="UniProtKB-KW"/>
</dbReference>
<dbReference type="GO" id="GO:0051539">
    <property type="term" value="F:4 iron, 4 sulfur cluster binding"/>
    <property type="evidence" value="ECO:0007669"/>
    <property type="project" value="UniProtKB-KW"/>
</dbReference>
<dbReference type="GO" id="GO:0004076">
    <property type="term" value="F:biotin synthase activity"/>
    <property type="evidence" value="ECO:0007669"/>
    <property type="project" value="UniProtKB-UniRule"/>
</dbReference>
<dbReference type="GO" id="GO:0005506">
    <property type="term" value="F:iron ion binding"/>
    <property type="evidence" value="ECO:0007669"/>
    <property type="project" value="UniProtKB-UniRule"/>
</dbReference>
<dbReference type="GO" id="GO:0009102">
    <property type="term" value="P:biotin biosynthetic process"/>
    <property type="evidence" value="ECO:0007669"/>
    <property type="project" value="UniProtKB-UniRule"/>
</dbReference>
<dbReference type="CDD" id="cd01335">
    <property type="entry name" value="Radical_SAM"/>
    <property type="match status" value="1"/>
</dbReference>
<dbReference type="FunFam" id="3.20.20.70:FF:000011">
    <property type="entry name" value="Biotin synthase"/>
    <property type="match status" value="1"/>
</dbReference>
<dbReference type="Gene3D" id="3.20.20.70">
    <property type="entry name" value="Aldolase class I"/>
    <property type="match status" value="1"/>
</dbReference>
<dbReference type="HAMAP" id="MF_01694">
    <property type="entry name" value="BioB"/>
    <property type="match status" value="1"/>
</dbReference>
<dbReference type="InterPro" id="IPR013785">
    <property type="entry name" value="Aldolase_TIM"/>
</dbReference>
<dbReference type="InterPro" id="IPR010722">
    <property type="entry name" value="BATS_dom"/>
</dbReference>
<dbReference type="InterPro" id="IPR002684">
    <property type="entry name" value="Biotin_synth/BioAB"/>
</dbReference>
<dbReference type="InterPro" id="IPR024177">
    <property type="entry name" value="Biotin_synthase"/>
</dbReference>
<dbReference type="InterPro" id="IPR006638">
    <property type="entry name" value="Elp3/MiaA/NifB-like_rSAM"/>
</dbReference>
<dbReference type="InterPro" id="IPR007197">
    <property type="entry name" value="rSAM"/>
</dbReference>
<dbReference type="NCBIfam" id="TIGR00433">
    <property type="entry name" value="bioB"/>
    <property type="match status" value="1"/>
</dbReference>
<dbReference type="PANTHER" id="PTHR22976">
    <property type="entry name" value="BIOTIN SYNTHASE"/>
    <property type="match status" value="1"/>
</dbReference>
<dbReference type="PANTHER" id="PTHR22976:SF2">
    <property type="entry name" value="BIOTIN SYNTHASE, MITOCHONDRIAL"/>
    <property type="match status" value="1"/>
</dbReference>
<dbReference type="Pfam" id="PF06968">
    <property type="entry name" value="BATS"/>
    <property type="match status" value="1"/>
</dbReference>
<dbReference type="Pfam" id="PF04055">
    <property type="entry name" value="Radical_SAM"/>
    <property type="match status" value="1"/>
</dbReference>
<dbReference type="PIRSF" id="PIRSF001619">
    <property type="entry name" value="Biotin_synth"/>
    <property type="match status" value="1"/>
</dbReference>
<dbReference type="SFLD" id="SFLDF00272">
    <property type="entry name" value="biotin_synthase"/>
    <property type="match status" value="1"/>
</dbReference>
<dbReference type="SFLD" id="SFLDS00029">
    <property type="entry name" value="Radical_SAM"/>
    <property type="match status" value="1"/>
</dbReference>
<dbReference type="SMART" id="SM00876">
    <property type="entry name" value="BATS"/>
    <property type="match status" value="1"/>
</dbReference>
<dbReference type="SMART" id="SM00729">
    <property type="entry name" value="Elp3"/>
    <property type="match status" value="1"/>
</dbReference>
<dbReference type="SUPFAM" id="SSF102114">
    <property type="entry name" value="Radical SAM enzymes"/>
    <property type="match status" value="1"/>
</dbReference>
<dbReference type="PROSITE" id="PS51918">
    <property type="entry name" value="RADICAL_SAM"/>
    <property type="match status" value="1"/>
</dbReference>
<keyword id="KW-0001">2Fe-2S</keyword>
<keyword id="KW-0004">4Fe-4S</keyword>
<keyword id="KW-0093">Biotin biosynthesis</keyword>
<keyword id="KW-0408">Iron</keyword>
<keyword id="KW-0411">Iron-sulfur</keyword>
<keyword id="KW-0479">Metal-binding</keyword>
<keyword id="KW-0949">S-adenosyl-L-methionine</keyword>
<keyword id="KW-0808">Transferase</keyword>
<proteinExistence type="inferred from homology"/>
<sequence length="336" mass="36668">MTEAQTACATTETPVAAPAAPRWRVADVIALYELPFNDLLFRAQQTHREHFDANAIQLSTLLSIKTGGCEEDCGYCSQSAHHDTGLKAEKLMEVDAVLAAARTAKENGATRFCMGAAWRNPKDRHIEPIKEMIRGVKDMGLETCVTLGMLEEHQAKALAEAGLDYYNHNLDTSPEFYGQIISTRTYQDRLDTLERVRDAGINVCCGGIIGMGESRRERAGLIAQLANMNPYPESVPINNLVAIEGTPLENAQALDPFEFVRTIAVARITMPKAMVRLSAGREQLDDAMQALCFLAGANSMFYGDVLLTTGNPRAEADRKLLARLGMSASEASQLSA</sequence>
<evidence type="ECO:0000255" key="1">
    <source>
        <dbReference type="HAMAP-Rule" id="MF_01694"/>
    </source>
</evidence>
<evidence type="ECO:0000255" key="2">
    <source>
        <dbReference type="PROSITE-ProRule" id="PRU01266"/>
    </source>
</evidence>
<evidence type="ECO:0000305" key="3"/>
<protein>
    <recommendedName>
        <fullName evidence="1">Biotin synthase</fullName>
        <ecNumber evidence="1">2.8.1.6</ecNumber>
    </recommendedName>
</protein>
<reference key="1">
    <citation type="journal article" date="2010" name="Genome Biol. Evol.">
        <title>Continuing evolution of Burkholderia mallei through genome reduction and large-scale rearrangements.</title>
        <authorList>
            <person name="Losada L."/>
            <person name="Ronning C.M."/>
            <person name="DeShazer D."/>
            <person name="Woods D."/>
            <person name="Fedorova N."/>
            <person name="Kim H.S."/>
            <person name="Shabalina S.A."/>
            <person name="Pearson T.R."/>
            <person name="Brinkac L."/>
            <person name="Tan P."/>
            <person name="Nandi T."/>
            <person name="Crabtree J."/>
            <person name="Badger J."/>
            <person name="Beckstrom-Sternberg S."/>
            <person name="Saqib M."/>
            <person name="Schutzer S.E."/>
            <person name="Keim P."/>
            <person name="Nierman W.C."/>
        </authorList>
    </citation>
    <scope>NUCLEOTIDE SEQUENCE [LARGE SCALE GENOMIC DNA]</scope>
    <source>
        <strain>NCTC 10229</strain>
    </source>
</reference>